<dbReference type="EC" id="3.1.21.2" evidence="1"/>
<dbReference type="EMBL" id="BX571661">
    <property type="protein sequence ID" value="CAE10776.1"/>
    <property type="molecule type" value="Genomic_DNA"/>
</dbReference>
<dbReference type="RefSeq" id="WP_011139559.1">
    <property type="nucleotide sequence ID" value="NC_005090.1"/>
</dbReference>
<dbReference type="SMR" id="Q7M8B4"/>
<dbReference type="STRING" id="273121.WS1754"/>
<dbReference type="KEGG" id="wsu:WS1754"/>
<dbReference type="eggNOG" id="COG0648">
    <property type="taxonomic scope" value="Bacteria"/>
</dbReference>
<dbReference type="HOGENOM" id="CLU_025885_0_4_7"/>
<dbReference type="Proteomes" id="UP000000422">
    <property type="component" value="Chromosome"/>
</dbReference>
<dbReference type="GO" id="GO:0008833">
    <property type="term" value="F:deoxyribonuclease IV (phage-T4-induced) activity"/>
    <property type="evidence" value="ECO:0007669"/>
    <property type="project" value="UniProtKB-UniRule"/>
</dbReference>
<dbReference type="GO" id="GO:0003677">
    <property type="term" value="F:DNA binding"/>
    <property type="evidence" value="ECO:0007669"/>
    <property type="project" value="InterPro"/>
</dbReference>
<dbReference type="GO" id="GO:0003906">
    <property type="term" value="F:DNA-(apurinic or apyrimidinic site) endonuclease activity"/>
    <property type="evidence" value="ECO:0007669"/>
    <property type="project" value="TreeGrafter"/>
</dbReference>
<dbReference type="GO" id="GO:0008081">
    <property type="term" value="F:phosphoric diester hydrolase activity"/>
    <property type="evidence" value="ECO:0007669"/>
    <property type="project" value="TreeGrafter"/>
</dbReference>
<dbReference type="GO" id="GO:0008270">
    <property type="term" value="F:zinc ion binding"/>
    <property type="evidence" value="ECO:0007669"/>
    <property type="project" value="UniProtKB-UniRule"/>
</dbReference>
<dbReference type="GO" id="GO:0006284">
    <property type="term" value="P:base-excision repair"/>
    <property type="evidence" value="ECO:0007669"/>
    <property type="project" value="TreeGrafter"/>
</dbReference>
<dbReference type="CDD" id="cd00019">
    <property type="entry name" value="AP2Ec"/>
    <property type="match status" value="1"/>
</dbReference>
<dbReference type="FunFam" id="3.20.20.150:FF:000001">
    <property type="entry name" value="Probable endonuclease 4"/>
    <property type="match status" value="1"/>
</dbReference>
<dbReference type="Gene3D" id="3.20.20.150">
    <property type="entry name" value="Divalent-metal-dependent TIM barrel enzymes"/>
    <property type="match status" value="1"/>
</dbReference>
<dbReference type="HAMAP" id="MF_00152">
    <property type="entry name" value="Nfo"/>
    <property type="match status" value="1"/>
</dbReference>
<dbReference type="InterPro" id="IPR001719">
    <property type="entry name" value="AP_endonuc_2"/>
</dbReference>
<dbReference type="InterPro" id="IPR018246">
    <property type="entry name" value="AP_endonuc_F2_Zn_BS"/>
</dbReference>
<dbReference type="InterPro" id="IPR036237">
    <property type="entry name" value="Xyl_isomerase-like_sf"/>
</dbReference>
<dbReference type="InterPro" id="IPR013022">
    <property type="entry name" value="Xyl_isomerase-like_TIM-brl"/>
</dbReference>
<dbReference type="NCBIfam" id="TIGR00587">
    <property type="entry name" value="nfo"/>
    <property type="match status" value="1"/>
</dbReference>
<dbReference type="NCBIfam" id="NF002199">
    <property type="entry name" value="PRK01060.1-4"/>
    <property type="match status" value="1"/>
</dbReference>
<dbReference type="PANTHER" id="PTHR21445:SF0">
    <property type="entry name" value="APURINIC-APYRIMIDINIC ENDONUCLEASE"/>
    <property type="match status" value="1"/>
</dbReference>
<dbReference type="PANTHER" id="PTHR21445">
    <property type="entry name" value="ENDONUCLEASE IV ENDODEOXYRIBONUCLEASE IV"/>
    <property type="match status" value="1"/>
</dbReference>
<dbReference type="Pfam" id="PF01261">
    <property type="entry name" value="AP_endonuc_2"/>
    <property type="match status" value="1"/>
</dbReference>
<dbReference type="SMART" id="SM00518">
    <property type="entry name" value="AP2Ec"/>
    <property type="match status" value="1"/>
</dbReference>
<dbReference type="SUPFAM" id="SSF51658">
    <property type="entry name" value="Xylose isomerase-like"/>
    <property type="match status" value="1"/>
</dbReference>
<dbReference type="PROSITE" id="PS00729">
    <property type="entry name" value="AP_NUCLEASE_F2_1"/>
    <property type="match status" value="1"/>
</dbReference>
<dbReference type="PROSITE" id="PS00730">
    <property type="entry name" value="AP_NUCLEASE_F2_2"/>
    <property type="match status" value="1"/>
</dbReference>
<dbReference type="PROSITE" id="PS00731">
    <property type="entry name" value="AP_NUCLEASE_F2_3"/>
    <property type="match status" value="1"/>
</dbReference>
<dbReference type="PROSITE" id="PS51432">
    <property type="entry name" value="AP_NUCLEASE_F2_4"/>
    <property type="match status" value="1"/>
</dbReference>
<accession>Q7M8B4</accession>
<feature type="chain" id="PRO_0000190888" description="Probable endonuclease 4">
    <location>
        <begin position="1"/>
        <end position="282"/>
    </location>
</feature>
<feature type="binding site" evidence="1">
    <location>
        <position position="70"/>
    </location>
    <ligand>
        <name>Zn(2+)</name>
        <dbReference type="ChEBI" id="CHEBI:29105"/>
        <label>1</label>
    </ligand>
</feature>
<feature type="binding site" evidence="1">
    <location>
        <position position="110"/>
    </location>
    <ligand>
        <name>Zn(2+)</name>
        <dbReference type="ChEBI" id="CHEBI:29105"/>
        <label>1</label>
    </ligand>
</feature>
<feature type="binding site" evidence="1">
    <location>
        <position position="146"/>
    </location>
    <ligand>
        <name>Zn(2+)</name>
        <dbReference type="ChEBI" id="CHEBI:29105"/>
        <label>1</label>
    </ligand>
</feature>
<feature type="binding site" evidence="1">
    <location>
        <position position="146"/>
    </location>
    <ligand>
        <name>Zn(2+)</name>
        <dbReference type="ChEBI" id="CHEBI:29105"/>
        <label>2</label>
    </ligand>
</feature>
<feature type="binding site" evidence="1">
    <location>
        <position position="180"/>
    </location>
    <ligand>
        <name>Zn(2+)</name>
        <dbReference type="ChEBI" id="CHEBI:29105"/>
        <label>2</label>
    </ligand>
</feature>
<feature type="binding site" evidence="1">
    <location>
        <position position="183"/>
    </location>
    <ligand>
        <name>Zn(2+)</name>
        <dbReference type="ChEBI" id="CHEBI:29105"/>
        <label>3</label>
    </ligand>
</feature>
<feature type="binding site" evidence="1">
    <location>
        <position position="217"/>
    </location>
    <ligand>
        <name>Zn(2+)</name>
        <dbReference type="ChEBI" id="CHEBI:29105"/>
        <label>2</label>
    </ligand>
</feature>
<feature type="binding site" evidence="1">
    <location>
        <position position="230"/>
    </location>
    <ligand>
        <name>Zn(2+)</name>
        <dbReference type="ChEBI" id="CHEBI:29105"/>
        <label>3</label>
    </ligand>
</feature>
<feature type="binding site" evidence="1">
    <location>
        <position position="232"/>
    </location>
    <ligand>
        <name>Zn(2+)</name>
        <dbReference type="ChEBI" id="CHEBI:29105"/>
        <label>3</label>
    </ligand>
</feature>
<feature type="binding site" evidence="1">
    <location>
        <position position="262"/>
    </location>
    <ligand>
        <name>Zn(2+)</name>
        <dbReference type="ChEBI" id="CHEBI:29105"/>
        <label>2</label>
    </ligand>
</feature>
<comment type="function">
    <text evidence="1">Endonuclease IV plays a role in DNA repair. It cleaves phosphodiester bonds at apurinic or apyrimidinic (AP) sites, generating a 3'-hydroxyl group and a 5'-terminal sugar phosphate.</text>
</comment>
<comment type="catalytic activity">
    <reaction evidence="1">
        <text>Endonucleolytic cleavage to 5'-phosphooligonucleotide end-products.</text>
        <dbReference type="EC" id="3.1.21.2"/>
    </reaction>
</comment>
<comment type="cofactor">
    <cofactor evidence="1">
        <name>Zn(2+)</name>
        <dbReference type="ChEBI" id="CHEBI:29105"/>
    </cofactor>
    <text evidence="1">Binds 3 Zn(2+) ions.</text>
</comment>
<comment type="similarity">
    <text evidence="1">Belongs to the AP endonuclease 2 family.</text>
</comment>
<protein>
    <recommendedName>
        <fullName evidence="1">Probable endonuclease 4</fullName>
        <ecNumber evidence="1">3.1.21.2</ecNumber>
    </recommendedName>
    <alternativeName>
        <fullName evidence="1">Endodeoxyribonuclease IV</fullName>
    </alternativeName>
    <alternativeName>
        <fullName evidence="1">Endonuclease IV</fullName>
    </alternativeName>
</protein>
<organism>
    <name type="scientific">Wolinella succinogenes (strain ATCC 29543 / DSM 1740 / CCUG 13145 / JCM 31913 / LMG 7466 / NCTC 11488 / FDC 602W)</name>
    <name type="common">Vibrio succinogenes</name>
    <dbReference type="NCBI Taxonomy" id="273121"/>
    <lineage>
        <taxon>Bacteria</taxon>
        <taxon>Pseudomonadati</taxon>
        <taxon>Campylobacterota</taxon>
        <taxon>Epsilonproteobacteria</taxon>
        <taxon>Campylobacterales</taxon>
        <taxon>Helicobacteraceae</taxon>
        <taxon>Wolinella</taxon>
    </lineage>
</organism>
<gene>
    <name evidence="1" type="primary">nfo</name>
    <name type="ordered locus">WS1754</name>
</gene>
<keyword id="KW-0227">DNA damage</keyword>
<keyword id="KW-0234">DNA repair</keyword>
<keyword id="KW-0255">Endonuclease</keyword>
<keyword id="KW-0378">Hydrolase</keyword>
<keyword id="KW-0479">Metal-binding</keyword>
<keyword id="KW-0540">Nuclease</keyword>
<keyword id="KW-1185">Reference proteome</keyword>
<keyword id="KW-0862">Zinc</keyword>
<reference key="1">
    <citation type="journal article" date="2003" name="Proc. Natl. Acad. Sci. U.S.A.">
        <title>Complete genome sequence and analysis of Wolinella succinogenes.</title>
        <authorList>
            <person name="Baar C."/>
            <person name="Eppinger M."/>
            <person name="Raddatz G."/>
            <person name="Simon J."/>
            <person name="Lanz C."/>
            <person name="Klimmek O."/>
            <person name="Nandakumar R."/>
            <person name="Gross R."/>
            <person name="Rosinus A."/>
            <person name="Keller H."/>
            <person name="Jagtap P."/>
            <person name="Linke B."/>
            <person name="Meyer F."/>
            <person name="Lederer H."/>
            <person name="Schuster S.C."/>
        </authorList>
    </citation>
    <scope>NUCLEOTIDE SEQUENCE [LARGE SCALE GENOMIC DNA]</scope>
    <source>
        <strain>ATCC 29543 / DSM 1740 / CCUG 13145 / JCM 31913 / LMG 7466 / NCTC 11488 / FDC 602W</strain>
    </source>
</reference>
<name>END4_WOLSU</name>
<sequence length="282" mass="31170">MKKFVGAHVSASGGVRNAPLNAQKIGAKAFALFTKNQRQWSAKALEEEEIEQFKANLKAAGIAPSCVLPHDSYLINLGHPGEAELAKSREAFLDEMRRCEQLGLDRLNFHPGSHLGAISESECLSRVAESINLALEATSGVIAVIENTAGQGSNVGYDFRHLGEIIDQVHDKSRVGICIDTCHMFSAGYDIRTREAYEASMAILDREVGWCYLKGMHLNDSKVKFQSRVDRHHSLGMGELGIAPFEFIMNDPRMDGIPLILETIDEALWAQEITLLYSLIKE</sequence>
<proteinExistence type="inferred from homology"/>
<evidence type="ECO:0000255" key="1">
    <source>
        <dbReference type="HAMAP-Rule" id="MF_00152"/>
    </source>
</evidence>